<proteinExistence type="inferred from homology"/>
<organism>
    <name type="scientific">Histophilus somni (strain 2336)</name>
    <name type="common">Haemophilus somnus</name>
    <dbReference type="NCBI Taxonomy" id="228400"/>
    <lineage>
        <taxon>Bacteria</taxon>
        <taxon>Pseudomonadati</taxon>
        <taxon>Pseudomonadota</taxon>
        <taxon>Gammaproteobacteria</taxon>
        <taxon>Pasteurellales</taxon>
        <taxon>Pasteurellaceae</taxon>
        <taxon>Histophilus</taxon>
    </lineage>
</organism>
<name>SYGB_HISS2</name>
<accession>B0UWA9</accession>
<evidence type="ECO:0000255" key="1">
    <source>
        <dbReference type="HAMAP-Rule" id="MF_00255"/>
    </source>
</evidence>
<feature type="chain" id="PRO_1000078543" description="Glycine--tRNA ligase beta subunit">
    <location>
        <begin position="1"/>
        <end position="688"/>
    </location>
</feature>
<sequence>MTAQNFLAEIGTEELPPKALKKLATAFAENVEQELNQAGLAFEKVEWFAAPRRLAVKVLGLAEAQPSKQVEKRGPAVSAAFDAEGKPTKAAEGWARGCGITVEQAERLATDKGEWLVHRAVIEGQPTKNLLVGIIDKALAGLPIPKTMRWGDKTEQFVRPVHTVTLLFGADLIEGEILGVASGRTVRGHRFLGEREFSLDHADQYPQLLKERGSVVADFNERKALILATSQEKATALGGVADIEEELLEEVTSLVEYPNVLTAKFEERFLAVPAEALVYTMKGDQKYFPIYDKDGKLLPHFIFVSNINPDDPSKIIEGNEKVVRPRLTDAEFFFKTDLKQKLEDRLPRLETVLFQQQLGTLRDKTARIEALAGEIAAQIGADQTKAKRAGLLSKCDLMTNMVFEFTDTQGVMGMHYARHDGEDEDVAVALNEQYMPRFAGDTLPNSLVACSVALADKIDTLTGIFGIGQSPKGSADPFALRRAALGCLRIIVEKNLPLDLVDIVAKATALFGDKLTNKNVVDEVVDFMLGRFRAWYESEGIAVDVIQSVLARRPTKPADFDARVRAVSHFRTLDSAEALAAANKRVSNILAKADIAIGEIDLGVCVESAEKTLAEAVIALKGEVQPLIAQGDYTAVLDKLANLRQPIDAFFDGVMVNVEEQTLRQNRLAILSTLQNLFLQVADISVLQ</sequence>
<reference key="1">
    <citation type="submission" date="2008-02" db="EMBL/GenBank/DDBJ databases">
        <title>Complete sequence of Haemophilus somnus 2336.</title>
        <authorList>
            <consortium name="US DOE Joint Genome Institute"/>
            <person name="Siddaramappa S."/>
            <person name="Duncan A.J."/>
            <person name="Challacombe J.F."/>
            <person name="Rainey D."/>
            <person name="Gillaspy A.F."/>
            <person name="Carson M."/>
            <person name="Gipson J."/>
            <person name="Gipson M."/>
            <person name="Bruce D."/>
            <person name="Detter J.C."/>
            <person name="Han C.S."/>
            <person name="Land M."/>
            <person name="Tapia R."/>
            <person name="Thompson L.S."/>
            <person name="Orvis J."/>
            <person name="Zaitshik J."/>
            <person name="Barnes G."/>
            <person name="Brettin T.S."/>
            <person name="Dyer D.W."/>
            <person name="Inzana T.J."/>
        </authorList>
    </citation>
    <scope>NUCLEOTIDE SEQUENCE [LARGE SCALE GENOMIC DNA]</scope>
    <source>
        <strain>2336</strain>
    </source>
</reference>
<protein>
    <recommendedName>
        <fullName evidence="1">Glycine--tRNA ligase beta subunit</fullName>
        <ecNumber evidence="1">6.1.1.14</ecNumber>
    </recommendedName>
    <alternativeName>
        <fullName evidence="1">Glycyl-tRNA synthetase beta subunit</fullName>
        <shortName evidence="1">GlyRS</shortName>
    </alternativeName>
</protein>
<keyword id="KW-0030">Aminoacyl-tRNA synthetase</keyword>
<keyword id="KW-0067">ATP-binding</keyword>
<keyword id="KW-0963">Cytoplasm</keyword>
<keyword id="KW-0436">Ligase</keyword>
<keyword id="KW-0547">Nucleotide-binding</keyword>
<keyword id="KW-0648">Protein biosynthesis</keyword>
<gene>
    <name evidence="1" type="primary">glyS</name>
    <name type="ordered locus">HSM_1792</name>
</gene>
<dbReference type="EC" id="6.1.1.14" evidence="1"/>
<dbReference type="EMBL" id="CP000947">
    <property type="protein sequence ID" value="ACA31576.1"/>
    <property type="molecule type" value="Genomic_DNA"/>
</dbReference>
<dbReference type="RefSeq" id="WP_012340895.1">
    <property type="nucleotide sequence ID" value="NC_010519.1"/>
</dbReference>
<dbReference type="SMR" id="B0UWA9"/>
<dbReference type="STRING" id="228400.HSM_1792"/>
<dbReference type="GeneID" id="31488099"/>
<dbReference type="KEGG" id="hsm:HSM_1792"/>
<dbReference type="HOGENOM" id="CLU_007220_2_2_6"/>
<dbReference type="GO" id="GO:0005829">
    <property type="term" value="C:cytosol"/>
    <property type="evidence" value="ECO:0007669"/>
    <property type="project" value="TreeGrafter"/>
</dbReference>
<dbReference type="GO" id="GO:0004814">
    <property type="term" value="F:arginine-tRNA ligase activity"/>
    <property type="evidence" value="ECO:0007669"/>
    <property type="project" value="InterPro"/>
</dbReference>
<dbReference type="GO" id="GO:0005524">
    <property type="term" value="F:ATP binding"/>
    <property type="evidence" value="ECO:0007669"/>
    <property type="project" value="UniProtKB-UniRule"/>
</dbReference>
<dbReference type="GO" id="GO:0004820">
    <property type="term" value="F:glycine-tRNA ligase activity"/>
    <property type="evidence" value="ECO:0007669"/>
    <property type="project" value="UniProtKB-UniRule"/>
</dbReference>
<dbReference type="GO" id="GO:0006420">
    <property type="term" value="P:arginyl-tRNA aminoacylation"/>
    <property type="evidence" value="ECO:0007669"/>
    <property type="project" value="InterPro"/>
</dbReference>
<dbReference type="GO" id="GO:0006426">
    <property type="term" value="P:glycyl-tRNA aminoacylation"/>
    <property type="evidence" value="ECO:0007669"/>
    <property type="project" value="UniProtKB-UniRule"/>
</dbReference>
<dbReference type="HAMAP" id="MF_00255">
    <property type="entry name" value="Gly_tRNA_synth_beta"/>
    <property type="match status" value="1"/>
</dbReference>
<dbReference type="InterPro" id="IPR008909">
    <property type="entry name" value="DALR_anticod-bd"/>
</dbReference>
<dbReference type="InterPro" id="IPR015944">
    <property type="entry name" value="Gly-tRNA-synth_bsu"/>
</dbReference>
<dbReference type="InterPro" id="IPR006194">
    <property type="entry name" value="Gly-tRNA-synth_heterodimer"/>
</dbReference>
<dbReference type="NCBIfam" id="TIGR00211">
    <property type="entry name" value="glyS"/>
    <property type="match status" value="1"/>
</dbReference>
<dbReference type="PANTHER" id="PTHR30075:SF2">
    <property type="entry name" value="GLYCINE--TRNA LIGASE, CHLOROPLASTIC_MITOCHONDRIAL 2"/>
    <property type="match status" value="1"/>
</dbReference>
<dbReference type="PANTHER" id="PTHR30075">
    <property type="entry name" value="GLYCYL-TRNA SYNTHETASE"/>
    <property type="match status" value="1"/>
</dbReference>
<dbReference type="Pfam" id="PF05746">
    <property type="entry name" value="DALR_1"/>
    <property type="match status" value="1"/>
</dbReference>
<dbReference type="Pfam" id="PF02092">
    <property type="entry name" value="tRNA_synt_2f"/>
    <property type="match status" value="1"/>
</dbReference>
<dbReference type="PRINTS" id="PR01045">
    <property type="entry name" value="TRNASYNTHGB"/>
</dbReference>
<dbReference type="SUPFAM" id="SSF109604">
    <property type="entry name" value="HD-domain/PDEase-like"/>
    <property type="match status" value="1"/>
</dbReference>
<dbReference type="PROSITE" id="PS50861">
    <property type="entry name" value="AA_TRNA_LIGASE_II_GLYAB"/>
    <property type="match status" value="1"/>
</dbReference>
<comment type="catalytic activity">
    <reaction evidence="1">
        <text>tRNA(Gly) + glycine + ATP = glycyl-tRNA(Gly) + AMP + diphosphate</text>
        <dbReference type="Rhea" id="RHEA:16013"/>
        <dbReference type="Rhea" id="RHEA-COMP:9664"/>
        <dbReference type="Rhea" id="RHEA-COMP:9683"/>
        <dbReference type="ChEBI" id="CHEBI:30616"/>
        <dbReference type="ChEBI" id="CHEBI:33019"/>
        <dbReference type="ChEBI" id="CHEBI:57305"/>
        <dbReference type="ChEBI" id="CHEBI:78442"/>
        <dbReference type="ChEBI" id="CHEBI:78522"/>
        <dbReference type="ChEBI" id="CHEBI:456215"/>
        <dbReference type="EC" id="6.1.1.14"/>
    </reaction>
</comment>
<comment type="subunit">
    <text evidence="1">Tetramer of two alpha and two beta subunits.</text>
</comment>
<comment type="subcellular location">
    <subcellularLocation>
        <location evidence="1">Cytoplasm</location>
    </subcellularLocation>
</comment>
<comment type="similarity">
    <text evidence="1">Belongs to the class-II aminoacyl-tRNA synthetase family.</text>
</comment>